<reference key="1">
    <citation type="journal article" date="2004" name="Nature">
        <title>Genome evolution in yeasts.</title>
        <authorList>
            <person name="Dujon B."/>
            <person name="Sherman D."/>
            <person name="Fischer G."/>
            <person name="Durrens P."/>
            <person name="Casaregola S."/>
            <person name="Lafontaine I."/>
            <person name="de Montigny J."/>
            <person name="Marck C."/>
            <person name="Neuveglise C."/>
            <person name="Talla E."/>
            <person name="Goffard N."/>
            <person name="Frangeul L."/>
            <person name="Aigle M."/>
            <person name="Anthouard V."/>
            <person name="Babour A."/>
            <person name="Barbe V."/>
            <person name="Barnay S."/>
            <person name="Blanchin S."/>
            <person name="Beckerich J.-M."/>
            <person name="Beyne E."/>
            <person name="Bleykasten C."/>
            <person name="Boisrame A."/>
            <person name="Boyer J."/>
            <person name="Cattolico L."/>
            <person name="Confanioleri F."/>
            <person name="de Daruvar A."/>
            <person name="Despons L."/>
            <person name="Fabre E."/>
            <person name="Fairhead C."/>
            <person name="Ferry-Dumazet H."/>
            <person name="Groppi A."/>
            <person name="Hantraye F."/>
            <person name="Hennequin C."/>
            <person name="Jauniaux N."/>
            <person name="Joyet P."/>
            <person name="Kachouri R."/>
            <person name="Kerrest A."/>
            <person name="Koszul R."/>
            <person name="Lemaire M."/>
            <person name="Lesur I."/>
            <person name="Ma L."/>
            <person name="Muller H."/>
            <person name="Nicaud J.-M."/>
            <person name="Nikolski M."/>
            <person name="Oztas S."/>
            <person name="Ozier-Kalogeropoulos O."/>
            <person name="Pellenz S."/>
            <person name="Potier S."/>
            <person name="Richard G.-F."/>
            <person name="Straub M.-L."/>
            <person name="Suleau A."/>
            <person name="Swennen D."/>
            <person name="Tekaia F."/>
            <person name="Wesolowski-Louvel M."/>
            <person name="Westhof E."/>
            <person name="Wirth B."/>
            <person name="Zeniou-Meyer M."/>
            <person name="Zivanovic Y."/>
            <person name="Bolotin-Fukuhara M."/>
            <person name="Thierry A."/>
            <person name="Bouchier C."/>
            <person name="Caudron B."/>
            <person name="Scarpelli C."/>
            <person name="Gaillardin C."/>
            <person name="Weissenbach J."/>
            <person name="Wincker P."/>
            <person name="Souciet J.-L."/>
        </authorList>
    </citation>
    <scope>NUCLEOTIDE SEQUENCE [LARGE SCALE GENOMIC DNA]</scope>
    <source>
        <strain>ATCC 8585 / CBS 2359 / DSM 70799 / NBRC 1267 / NRRL Y-1140 / WM37</strain>
    </source>
</reference>
<sequence>MSDGTATPDPLPSSSNTSTSLRPTSRVRDESDVIGKLNDMIEEQPTDIFLYVKLLKHHVSLKQWKQVYETFDKLHDRFPLMANIWCMRLSLEFDKMEELDAAVIEPVLARCLSKELGNNDLSLWLSYITYVRKKNDIITGGEEARNIVIQAFQVVVDKCAIFEPKSIQFWNEYLHFLEHWKPVNKFEEQQRVQYIRKLYKTLLCQPMDCLESMWQRYTQWEQDVNQLTARRHIGELSAQYMNARSLYQDWLNITKGLKRNLPITLNQATESNLPKPNEYDVQQLLIWLEWIRWESDNKLELSDDLHKARMTYVYMQAAQHVCFAPEIWFNMANYQGEKNTDSTVITKYLKLGQQCIPNSAVLAFSLSEQYELNTKIPEIETTILSCIDRIHLDLAALMEDDPTNESAINQLKSKLTYVYCVYMNTMKRIQGLAASRKIFGKCRRLKKLVTPDIYLENAYIEYHISKDTKTACKVLELGLKYFATDGEYINKYLDFLIYVNEESQVKSLFESSIDKISDSHLLKMIFQKVIFFESKVGSLNSVRTLEKRFFEKFPEVNKLEEFTNKYKVLDVNYLQRLELDYMVRDVMPEAIALDRGSNNLKRTMREEEDGQAFKKFKANEDPIPPEIVELLKVLPKRQYFKVTIFEAHAFSEFLSDKVTIQ</sequence>
<feature type="chain" id="PRO_0000238526" description="mRNA 3'-end-processing protein RNA14">
    <location>
        <begin position="1"/>
        <end position="661"/>
    </location>
</feature>
<feature type="repeat" description="HAT 1">
    <location>
        <begin position="62"/>
        <end position="94"/>
    </location>
</feature>
<feature type="repeat" description="HAT 2">
    <location>
        <begin position="99"/>
        <end position="133"/>
    </location>
</feature>
<feature type="repeat" description="HAT 3">
    <location>
        <begin position="143"/>
        <end position="179"/>
    </location>
</feature>
<feature type="repeat" description="HAT 4">
    <location>
        <begin position="190"/>
        <end position="223"/>
    </location>
</feature>
<feature type="repeat" description="HAT 5">
    <location>
        <begin position="264"/>
        <end position="296"/>
    </location>
</feature>
<feature type="repeat" description="HAT 6">
    <location>
        <begin position="305"/>
        <end position="337"/>
    </location>
</feature>
<feature type="region of interest" description="Disordered" evidence="2">
    <location>
        <begin position="1"/>
        <end position="29"/>
    </location>
</feature>
<feature type="compositionally biased region" description="Low complexity" evidence="2">
    <location>
        <begin position="12"/>
        <end position="24"/>
    </location>
</feature>
<feature type="turn" evidence="4">
    <location>
        <begin position="23"/>
        <end position="26"/>
    </location>
</feature>
<feature type="helix" evidence="3">
    <location>
        <begin position="33"/>
        <end position="43"/>
    </location>
</feature>
<feature type="helix" evidence="3">
    <location>
        <begin position="48"/>
        <end position="60"/>
    </location>
</feature>
<feature type="helix" evidence="3">
    <location>
        <begin position="64"/>
        <end position="77"/>
    </location>
</feature>
<feature type="helix" evidence="3">
    <location>
        <begin position="82"/>
        <end position="93"/>
    </location>
</feature>
<feature type="turn" evidence="4">
    <location>
        <begin position="94"/>
        <end position="97"/>
    </location>
</feature>
<feature type="helix" evidence="3">
    <location>
        <begin position="101"/>
        <end position="111"/>
    </location>
</feature>
<feature type="strand" evidence="3">
    <location>
        <begin position="114"/>
        <end position="116"/>
    </location>
</feature>
<feature type="helix" evidence="3">
    <location>
        <begin position="121"/>
        <end position="134"/>
    </location>
</feature>
<feature type="turn" evidence="3">
    <location>
        <begin position="138"/>
        <end position="140"/>
    </location>
</feature>
<feature type="helix" evidence="3">
    <location>
        <begin position="141"/>
        <end position="158"/>
    </location>
</feature>
<feature type="turn" evidence="3">
    <location>
        <begin position="159"/>
        <end position="162"/>
    </location>
</feature>
<feature type="helix" evidence="4">
    <location>
        <begin position="164"/>
        <end position="166"/>
    </location>
</feature>
<feature type="helix" evidence="3">
    <location>
        <begin position="167"/>
        <end position="178"/>
    </location>
</feature>
<feature type="helix" evidence="3">
    <location>
        <begin position="185"/>
        <end position="202"/>
    </location>
</feature>
<feature type="helix" evidence="3">
    <location>
        <begin position="210"/>
        <end position="224"/>
    </location>
</feature>
<feature type="turn" evidence="3">
    <location>
        <begin position="226"/>
        <end position="228"/>
    </location>
</feature>
<feature type="helix" evidence="3">
    <location>
        <begin position="229"/>
        <end position="253"/>
    </location>
</feature>
<feature type="turn" evidence="3">
    <location>
        <begin position="254"/>
        <end position="256"/>
    </location>
</feature>
<feature type="strand" evidence="3">
    <location>
        <begin position="263"/>
        <end position="265"/>
    </location>
</feature>
<feature type="turn" evidence="3">
    <location>
        <begin position="270"/>
        <end position="272"/>
    </location>
</feature>
<feature type="helix" evidence="3">
    <location>
        <begin position="281"/>
        <end position="295"/>
    </location>
</feature>
<feature type="helix" evidence="3">
    <location>
        <begin position="303"/>
        <end position="320"/>
    </location>
</feature>
<feature type="turn" evidence="3">
    <location>
        <begin position="321"/>
        <end position="323"/>
    </location>
</feature>
<feature type="helix" evidence="3">
    <location>
        <begin position="325"/>
        <end position="338"/>
    </location>
</feature>
<feature type="helix" evidence="3">
    <location>
        <begin position="344"/>
        <end position="355"/>
    </location>
</feature>
<feature type="helix" evidence="3">
    <location>
        <begin position="360"/>
        <end position="372"/>
    </location>
</feature>
<feature type="helix" evidence="3">
    <location>
        <begin position="376"/>
        <end position="400"/>
    </location>
</feature>
<feature type="helix" evidence="3">
    <location>
        <begin position="405"/>
        <end position="430"/>
    </location>
</feature>
<feature type="helix" evidence="3">
    <location>
        <begin position="432"/>
        <end position="444"/>
    </location>
</feature>
<feature type="helix" evidence="3">
    <location>
        <begin position="445"/>
        <end position="448"/>
    </location>
</feature>
<feature type="helix" evidence="3">
    <location>
        <begin position="452"/>
        <end position="462"/>
    </location>
</feature>
<feature type="turn" evidence="3">
    <location>
        <begin position="463"/>
        <end position="465"/>
    </location>
</feature>
<feature type="helix" evidence="3">
    <location>
        <begin position="469"/>
        <end position="482"/>
    </location>
</feature>
<feature type="helix" evidence="3">
    <location>
        <begin position="486"/>
        <end position="499"/>
    </location>
</feature>
<feature type="helix" evidence="3">
    <location>
        <begin position="502"/>
        <end position="512"/>
    </location>
</feature>
<feature type="turn" evidence="3">
    <location>
        <begin position="513"/>
        <end position="515"/>
    </location>
</feature>
<feature type="strand" evidence="3">
    <location>
        <begin position="516"/>
        <end position="518"/>
    </location>
</feature>
<feature type="helix" evidence="3">
    <location>
        <begin position="521"/>
        <end position="535"/>
    </location>
</feature>
<feature type="helix" evidence="3">
    <location>
        <begin position="540"/>
        <end position="552"/>
    </location>
</feature>
<feature type="helix" evidence="3">
    <location>
        <begin position="558"/>
        <end position="565"/>
    </location>
</feature>
<feature type="helix" evidence="3">
    <location>
        <begin position="573"/>
        <end position="577"/>
    </location>
</feature>
<feature type="turn" evidence="5">
    <location>
        <begin position="628"/>
        <end position="633"/>
    </location>
</feature>
<feature type="helix" evidence="5">
    <location>
        <begin position="648"/>
        <end position="650"/>
    </location>
</feature>
<feature type="turn" evidence="5">
    <location>
        <begin position="651"/>
        <end position="656"/>
    </location>
</feature>
<name>RNA14_KLULA</name>
<keyword id="KW-0002">3D-structure</keyword>
<keyword id="KW-0963">Cytoplasm</keyword>
<keyword id="KW-0507">mRNA processing</keyword>
<keyword id="KW-0539">Nucleus</keyword>
<keyword id="KW-1185">Reference proteome</keyword>
<keyword id="KW-0677">Repeat</keyword>
<organism>
    <name type="scientific">Kluyveromyces lactis (strain ATCC 8585 / CBS 2359 / DSM 70799 / NBRC 1267 / NRRL Y-1140 / WM37)</name>
    <name type="common">Yeast</name>
    <name type="synonym">Candida sphaerica</name>
    <dbReference type="NCBI Taxonomy" id="284590"/>
    <lineage>
        <taxon>Eukaryota</taxon>
        <taxon>Fungi</taxon>
        <taxon>Dikarya</taxon>
        <taxon>Ascomycota</taxon>
        <taxon>Saccharomycotina</taxon>
        <taxon>Saccharomycetes</taxon>
        <taxon>Saccharomycetales</taxon>
        <taxon>Saccharomycetaceae</taxon>
        <taxon>Kluyveromyces</taxon>
    </lineage>
</organism>
<accession>Q6CII8</accession>
<gene>
    <name type="primary">RNA14</name>
    <name type="ordered locus">KLLA0F26290g</name>
</gene>
<evidence type="ECO:0000250" key="1"/>
<evidence type="ECO:0000256" key="2">
    <source>
        <dbReference type="SAM" id="MobiDB-lite"/>
    </source>
</evidence>
<evidence type="ECO:0007829" key="3">
    <source>
        <dbReference type="PDB" id="4E6H"/>
    </source>
</evidence>
<evidence type="ECO:0007829" key="4">
    <source>
        <dbReference type="PDB" id="4E85"/>
    </source>
</evidence>
<evidence type="ECO:0007829" key="5">
    <source>
        <dbReference type="PDB" id="4EBA"/>
    </source>
</evidence>
<dbReference type="EMBL" id="CR382126">
    <property type="protein sequence ID" value="CAG98959.1"/>
    <property type="molecule type" value="Genomic_DNA"/>
</dbReference>
<dbReference type="RefSeq" id="XP_456251.1">
    <property type="nucleotide sequence ID" value="XM_456251.1"/>
</dbReference>
<dbReference type="PDB" id="4E6H">
    <property type="method" value="X-ray"/>
    <property type="resolution" value="2.30 A"/>
    <property type="chains" value="A=18-661"/>
</dbReference>
<dbReference type="PDB" id="4E85">
    <property type="method" value="X-ray"/>
    <property type="resolution" value="3.00 A"/>
    <property type="chains" value="A/B=18-661"/>
</dbReference>
<dbReference type="PDB" id="4EBA">
    <property type="method" value="X-ray"/>
    <property type="resolution" value="3.30 A"/>
    <property type="chains" value="A/B/C/D/E/F=18-661"/>
</dbReference>
<dbReference type="PDBsum" id="4E6H"/>
<dbReference type="PDBsum" id="4E85"/>
<dbReference type="PDBsum" id="4EBA"/>
<dbReference type="SMR" id="Q6CII8"/>
<dbReference type="FunCoup" id="Q6CII8">
    <property type="interactions" value="1261"/>
</dbReference>
<dbReference type="STRING" id="284590.Q6CII8"/>
<dbReference type="PaxDb" id="284590-Q6CII8"/>
<dbReference type="KEGG" id="kla:KLLA0_F26290g"/>
<dbReference type="eggNOG" id="KOG1914">
    <property type="taxonomic scope" value="Eukaryota"/>
</dbReference>
<dbReference type="HOGENOM" id="CLU_007630_0_1_1"/>
<dbReference type="InParanoid" id="Q6CII8"/>
<dbReference type="OMA" id="PKRQYFK"/>
<dbReference type="EvolutionaryTrace" id="Q6CII8"/>
<dbReference type="Proteomes" id="UP000000598">
    <property type="component" value="Chromosome F"/>
</dbReference>
<dbReference type="GO" id="GO:0005737">
    <property type="term" value="C:cytoplasm"/>
    <property type="evidence" value="ECO:0007669"/>
    <property type="project" value="UniProtKB-SubCell"/>
</dbReference>
<dbReference type="GO" id="GO:0005634">
    <property type="term" value="C:nucleus"/>
    <property type="evidence" value="ECO:0007669"/>
    <property type="project" value="UniProtKB-SubCell"/>
</dbReference>
<dbReference type="GO" id="GO:0032991">
    <property type="term" value="C:protein-containing complex"/>
    <property type="evidence" value="ECO:0007669"/>
    <property type="project" value="UniProtKB-ARBA"/>
</dbReference>
<dbReference type="GO" id="GO:0003729">
    <property type="term" value="F:mRNA binding"/>
    <property type="evidence" value="ECO:0007669"/>
    <property type="project" value="TreeGrafter"/>
</dbReference>
<dbReference type="GO" id="GO:0031124">
    <property type="term" value="P:mRNA 3'-end processing"/>
    <property type="evidence" value="ECO:0007669"/>
    <property type="project" value="InterPro"/>
</dbReference>
<dbReference type="Gene3D" id="1.25.40.1040">
    <property type="match status" value="1"/>
</dbReference>
<dbReference type="Gene3D" id="6.10.250.1660">
    <property type="match status" value="1"/>
</dbReference>
<dbReference type="InterPro" id="IPR003107">
    <property type="entry name" value="HAT"/>
</dbReference>
<dbReference type="InterPro" id="IPR045243">
    <property type="entry name" value="Rna14-like"/>
</dbReference>
<dbReference type="InterPro" id="IPR008847">
    <property type="entry name" value="Suf"/>
</dbReference>
<dbReference type="InterPro" id="IPR011990">
    <property type="entry name" value="TPR-like_helical_dom_sf"/>
</dbReference>
<dbReference type="PANTHER" id="PTHR19980:SF0">
    <property type="entry name" value="CLEAVAGE STIMULATION FACTOR SUBUNIT 3"/>
    <property type="match status" value="1"/>
</dbReference>
<dbReference type="PANTHER" id="PTHR19980">
    <property type="entry name" value="RNA CLEAVAGE STIMULATION FACTOR"/>
    <property type="match status" value="1"/>
</dbReference>
<dbReference type="Pfam" id="PF05843">
    <property type="entry name" value="Suf"/>
    <property type="match status" value="1"/>
</dbReference>
<dbReference type="SMART" id="SM00386">
    <property type="entry name" value="HAT"/>
    <property type="match status" value="7"/>
</dbReference>
<dbReference type="SUPFAM" id="SSF48452">
    <property type="entry name" value="TPR-like"/>
    <property type="match status" value="1"/>
</dbReference>
<proteinExistence type="evidence at protein level"/>
<comment type="function">
    <text evidence="1">Component of the cleavage factor IA (CFIA) complex, which is involved in the endonucleolytic cleavage during polyadenylation-dependent pre-mRNA 3'-end formation.</text>
</comment>
<comment type="subcellular location">
    <subcellularLocation>
        <location evidence="1">Nucleus</location>
    </subcellularLocation>
    <subcellularLocation>
        <location evidence="1">Cytoplasm</location>
    </subcellularLocation>
    <text evidence="1">Nucleus and/or cytoplasm.</text>
</comment>
<protein>
    <recommendedName>
        <fullName>mRNA 3'-end-processing protein RNA14</fullName>
    </recommendedName>
</protein>